<keyword id="KW-1185">Reference proteome</keyword>
<name>076R_FRG3G</name>
<organism>
    <name type="scientific">Frog virus 3 (isolate Goorha)</name>
    <name type="common">FV-3</name>
    <dbReference type="NCBI Taxonomy" id="654924"/>
    <lineage>
        <taxon>Viruses</taxon>
        <taxon>Varidnaviria</taxon>
        <taxon>Bamfordvirae</taxon>
        <taxon>Nucleocytoviricota</taxon>
        <taxon>Megaviricetes</taxon>
        <taxon>Pimascovirales</taxon>
        <taxon>Iridoviridae</taxon>
        <taxon>Alphairidovirinae</taxon>
        <taxon>Ranavirus</taxon>
        <taxon>Frog virus 3</taxon>
    </lineage>
</organism>
<sequence length="73" mass="7965">MFLSSAVRKDSNGVRHLPSVQRWTPGSPPTRAHGHVSYVAQCATAQCREAVGRTYPGVVKKGLENTDKVRGFI</sequence>
<reference key="1">
    <citation type="journal article" date="2004" name="Virology">
        <title>Comparative genomic analyses of frog virus 3, type species of the genus Ranavirus (family Iridoviridae).</title>
        <authorList>
            <person name="Tan W.G."/>
            <person name="Barkman T.J."/>
            <person name="Gregory Chinchar V."/>
            <person name="Essani K."/>
        </authorList>
    </citation>
    <scope>NUCLEOTIDE SEQUENCE [LARGE SCALE GENOMIC DNA]</scope>
</reference>
<organismHost>
    <name type="scientific">Dryophytes versicolor</name>
    <name type="common">chameleon treefrog</name>
    <dbReference type="NCBI Taxonomy" id="30343"/>
</organismHost>
<organismHost>
    <name type="scientific">Lithobates pipiens</name>
    <name type="common">Northern leopard frog</name>
    <name type="synonym">Rana pipiens</name>
    <dbReference type="NCBI Taxonomy" id="8404"/>
</organismHost>
<organismHost>
    <name type="scientific">Lithobates sylvaticus</name>
    <name type="common">Wood frog</name>
    <name type="synonym">Rana sylvatica</name>
    <dbReference type="NCBI Taxonomy" id="45438"/>
</organismHost>
<organismHost>
    <name type="scientific">Notophthalmus viridescens</name>
    <name type="common">Eastern newt</name>
    <name type="synonym">Triturus viridescens</name>
    <dbReference type="NCBI Taxonomy" id="8316"/>
</organismHost>
<gene>
    <name type="ORF">FV3-076R</name>
</gene>
<accession>Q6GZP9</accession>
<proteinExistence type="predicted"/>
<feature type="chain" id="PRO_0000410529" description="Uncharacterized protein 076R">
    <location>
        <begin position="1"/>
        <end position="73"/>
    </location>
</feature>
<feature type="region of interest" description="Disordered" evidence="1">
    <location>
        <begin position="1"/>
        <end position="32"/>
    </location>
</feature>
<protein>
    <recommendedName>
        <fullName>Uncharacterized protein 076R</fullName>
    </recommendedName>
</protein>
<evidence type="ECO:0000256" key="1">
    <source>
        <dbReference type="SAM" id="MobiDB-lite"/>
    </source>
</evidence>
<dbReference type="EMBL" id="AY548484">
    <property type="protein sequence ID" value="AAT09736.1"/>
    <property type="molecule type" value="Genomic_DNA"/>
</dbReference>
<dbReference type="RefSeq" id="YP_031655.1">
    <property type="nucleotide sequence ID" value="NC_005946.1"/>
</dbReference>
<dbReference type="SMR" id="Q6GZP9"/>
<dbReference type="KEGG" id="vg:2947795"/>
<dbReference type="Proteomes" id="UP000008770">
    <property type="component" value="Segment"/>
</dbReference>